<evidence type="ECO:0000255" key="1">
    <source>
        <dbReference type="HAMAP-Rule" id="MF_00634"/>
    </source>
</evidence>
<reference key="1">
    <citation type="submission" date="2006-09" db="EMBL/GenBank/DDBJ databases">
        <authorList>
            <consortium name="The Klebsiella pneumonia Genome Sequencing Project"/>
            <person name="McClelland M."/>
            <person name="Sanderson E.K."/>
            <person name="Spieth J."/>
            <person name="Clifton W.S."/>
            <person name="Latreille P."/>
            <person name="Sabo A."/>
            <person name="Pepin K."/>
            <person name="Bhonagiri V."/>
            <person name="Porwollik S."/>
            <person name="Ali J."/>
            <person name="Wilson R.K."/>
        </authorList>
    </citation>
    <scope>NUCLEOTIDE SEQUENCE [LARGE SCALE GENOMIC DNA]</scope>
    <source>
        <strain>ATCC 700721 / MGH 78578</strain>
    </source>
</reference>
<accession>A6TDW3</accession>
<dbReference type="EMBL" id="CP000647">
    <property type="protein sequence ID" value="ABR78784.1"/>
    <property type="molecule type" value="Genomic_DNA"/>
</dbReference>
<dbReference type="SMR" id="A6TDW3"/>
<dbReference type="STRING" id="272620.KPN_03387"/>
<dbReference type="PaxDb" id="272620-KPN_03387"/>
<dbReference type="EnsemblBacteria" id="ABR78784">
    <property type="protein sequence ID" value="ABR78784"/>
    <property type="gene ID" value="KPN_03387"/>
</dbReference>
<dbReference type="KEGG" id="kpn:KPN_03387"/>
<dbReference type="HOGENOM" id="CLU_130694_5_0_6"/>
<dbReference type="Proteomes" id="UP000000265">
    <property type="component" value="Chromosome"/>
</dbReference>
<dbReference type="GO" id="GO:0005737">
    <property type="term" value="C:cytoplasm"/>
    <property type="evidence" value="ECO:0007669"/>
    <property type="project" value="TreeGrafter"/>
</dbReference>
<dbReference type="Gene3D" id="3.30.1200.10">
    <property type="entry name" value="YggU-like"/>
    <property type="match status" value="1"/>
</dbReference>
<dbReference type="HAMAP" id="MF_00634">
    <property type="entry name" value="UPF0235"/>
    <property type="match status" value="1"/>
</dbReference>
<dbReference type="InterPro" id="IPR003746">
    <property type="entry name" value="DUF167"/>
</dbReference>
<dbReference type="InterPro" id="IPR036591">
    <property type="entry name" value="YggU-like_sf"/>
</dbReference>
<dbReference type="NCBIfam" id="TIGR00251">
    <property type="entry name" value="DUF167 family protein"/>
    <property type="match status" value="1"/>
</dbReference>
<dbReference type="NCBIfam" id="NF003466">
    <property type="entry name" value="PRK05090.1"/>
    <property type="match status" value="1"/>
</dbReference>
<dbReference type="PANTHER" id="PTHR13420">
    <property type="entry name" value="UPF0235 PROTEIN C15ORF40"/>
    <property type="match status" value="1"/>
</dbReference>
<dbReference type="PANTHER" id="PTHR13420:SF7">
    <property type="entry name" value="UPF0235 PROTEIN C15ORF40"/>
    <property type="match status" value="1"/>
</dbReference>
<dbReference type="Pfam" id="PF02594">
    <property type="entry name" value="DUF167"/>
    <property type="match status" value="1"/>
</dbReference>
<dbReference type="SMART" id="SM01152">
    <property type="entry name" value="DUF167"/>
    <property type="match status" value="1"/>
</dbReference>
<dbReference type="SUPFAM" id="SSF69786">
    <property type="entry name" value="YggU-like"/>
    <property type="match status" value="1"/>
</dbReference>
<name>Y3323_KLEP7</name>
<comment type="similarity">
    <text evidence="1">Belongs to the UPF0235 family.</text>
</comment>
<protein>
    <recommendedName>
        <fullName evidence="1">UPF0235 protein KPN78578_33230</fullName>
    </recommendedName>
</protein>
<sequence length="96" mass="10294">MSAVETCADGLVLRLYIQPKASRDSIVGVHGDELKVAITAPPVDGQANAHLVKFLAKQFRVAKSQVLIEKGELGRHKQVKIIAPQQIPTAVAALTE</sequence>
<gene>
    <name type="ordered locus">KPN78578_33230</name>
    <name type="ORF">KPN_03387</name>
</gene>
<proteinExistence type="inferred from homology"/>
<organism>
    <name type="scientific">Klebsiella pneumoniae subsp. pneumoniae (strain ATCC 700721 / MGH 78578)</name>
    <dbReference type="NCBI Taxonomy" id="272620"/>
    <lineage>
        <taxon>Bacteria</taxon>
        <taxon>Pseudomonadati</taxon>
        <taxon>Pseudomonadota</taxon>
        <taxon>Gammaproteobacteria</taxon>
        <taxon>Enterobacterales</taxon>
        <taxon>Enterobacteriaceae</taxon>
        <taxon>Klebsiella/Raoultella group</taxon>
        <taxon>Klebsiella</taxon>
        <taxon>Klebsiella pneumoniae complex</taxon>
    </lineage>
</organism>
<feature type="chain" id="PRO_1000061424" description="UPF0235 protein KPN78578_33230">
    <location>
        <begin position="1"/>
        <end position="96"/>
    </location>
</feature>